<name>SELA_SALPA</name>
<reference key="1">
    <citation type="journal article" date="2004" name="Nat. Genet.">
        <title>Comparison of genome degradation in Paratyphi A and Typhi, human-restricted serovars of Salmonella enterica that cause typhoid.</title>
        <authorList>
            <person name="McClelland M."/>
            <person name="Sanderson K.E."/>
            <person name="Clifton S.W."/>
            <person name="Latreille P."/>
            <person name="Porwollik S."/>
            <person name="Sabo A."/>
            <person name="Meyer R."/>
            <person name="Bieri T."/>
            <person name="Ozersky P."/>
            <person name="McLellan M."/>
            <person name="Harkins C.R."/>
            <person name="Wang C."/>
            <person name="Nguyen C."/>
            <person name="Berghoff A."/>
            <person name="Elliott G."/>
            <person name="Kohlberg S."/>
            <person name="Strong C."/>
            <person name="Du F."/>
            <person name="Carter J."/>
            <person name="Kremizki C."/>
            <person name="Layman D."/>
            <person name="Leonard S."/>
            <person name="Sun H."/>
            <person name="Fulton L."/>
            <person name="Nash W."/>
            <person name="Miner T."/>
            <person name="Minx P."/>
            <person name="Delehaunty K."/>
            <person name="Fronick C."/>
            <person name="Magrini V."/>
            <person name="Nhan M."/>
            <person name="Warren W."/>
            <person name="Florea L."/>
            <person name="Spieth J."/>
            <person name="Wilson R.K."/>
        </authorList>
    </citation>
    <scope>NUCLEOTIDE SEQUENCE [LARGE SCALE GENOMIC DNA]</scope>
    <source>
        <strain>ATCC 9150 / SARB42</strain>
    </source>
</reference>
<sequence>MTSETRTLYSQLPAIDRLLHDSAFLSLRDRYGHTQVVDLLRRMLDDARDVIRNTQTLPDWYADWAQEAKLRLENAAQSALRPVINLTGTVLHTNLGRALQAQEAIEAVTQAMRAPVTLEYDLDGAGRGHRDRALATLLCRITGAEDACIVNNNAAAVLLMLAATASGKEVVVSRGELVEIGGAFRIPDVMRQAGCTLHEVGTTNRTHAKDYRQAVNENTGLLMKVHTSNYSIEGFTKTVEEAELVEIGRELDIPVVADLGSGSLVDLSQYGLPKEPMLQQLIAAGVSLVSFSGDKLLGGPQAGIIVGKKAMIAQLQSHPLKRALRADKMTLAALEATLRLYLHPEALAEKLPTLRLLTRSEASIREQAQRLQARLAARYGDEFALEVKPCLSQIGSGSLPVDRLPSAAMTFTPHDGRGSRLEALAARWRTLPVPVIGRIYDGRLWLDMRCLEDESRFMEMMLK</sequence>
<organism>
    <name type="scientific">Salmonella paratyphi A (strain ATCC 9150 / SARB42)</name>
    <dbReference type="NCBI Taxonomy" id="295319"/>
    <lineage>
        <taxon>Bacteria</taxon>
        <taxon>Pseudomonadati</taxon>
        <taxon>Pseudomonadota</taxon>
        <taxon>Gammaproteobacteria</taxon>
        <taxon>Enterobacterales</taxon>
        <taxon>Enterobacteriaceae</taxon>
        <taxon>Salmonella</taxon>
    </lineage>
</organism>
<comment type="function">
    <text evidence="1">Converts seryl-tRNA(Sec) to selenocysteinyl-tRNA(Sec) required for selenoprotein biosynthesis.</text>
</comment>
<comment type="catalytic activity">
    <reaction evidence="1">
        <text>L-seryl-tRNA(Sec) + selenophosphate + H(+) = L-selenocysteinyl-tRNA(Sec) + phosphate</text>
        <dbReference type="Rhea" id="RHEA:22728"/>
        <dbReference type="Rhea" id="RHEA-COMP:9742"/>
        <dbReference type="Rhea" id="RHEA-COMP:9743"/>
        <dbReference type="ChEBI" id="CHEBI:15378"/>
        <dbReference type="ChEBI" id="CHEBI:16144"/>
        <dbReference type="ChEBI" id="CHEBI:43474"/>
        <dbReference type="ChEBI" id="CHEBI:78533"/>
        <dbReference type="ChEBI" id="CHEBI:78573"/>
        <dbReference type="EC" id="2.9.1.1"/>
    </reaction>
</comment>
<comment type="cofactor">
    <cofactor evidence="1">
        <name>pyridoxal 5'-phosphate</name>
        <dbReference type="ChEBI" id="CHEBI:597326"/>
    </cofactor>
</comment>
<comment type="pathway">
    <text evidence="1">Aminoacyl-tRNA biosynthesis; selenocysteinyl-tRNA(Sec) biosynthesis; selenocysteinyl-tRNA(Sec) from L-seryl-tRNA(Sec) (bacterial route): step 1/1.</text>
</comment>
<comment type="subunit">
    <text evidence="1">Homodecamer; pentamer of dimers. Binds only one seryl-tRNA(Sec) per dimer.</text>
</comment>
<comment type="subcellular location">
    <subcellularLocation>
        <location evidence="1">Cytoplasm</location>
    </subcellularLocation>
</comment>
<comment type="similarity">
    <text evidence="1">Belongs to the SelA family.</text>
</comment>
<evidence type="ECO:0000255" key="1">
    <source>
        <dbReference type="HAMAP-Rule" id="MF_00423"/>
    </source>
</evidence>
<dbReference type="EC" id="2.9.1.1" evidence="1"/>
<dbReference type="EMBL" id="CP000026">
    <property type="protein sequence ID" value="AAV79338.1"/>
    <property type="molecule type" value="Genomic_DNA"/>
</dbReference>
<dbReference type="RefSeq" id="WP_000200191.1">
    <property type="nucleotide sequence ID" value="NC_006511.1"/>
</dbReference>
<dbReference type="SMR" id="Q5PLQ2"/>
<dbReference type="KEGG" id="spt:SPA3534"/>
<dbReference type="HOGENOM" id="CLU_038142_1_0_6"/>
<dbReference type="UniPathway" id="UPA00906">
    <property type="reaction ID" value="UER00896"/>
</dbReference>
<dbReference type="Proteomes" id="UP000008185">
    <property type="component" value="Chromosome"/>
</dbReference>
<dbReference type="GO" id="GO:0005737">
    <property type="term" value="C:cytoplasm"/>
    <property type="evidence" value="ECO:0007669"/>
    <property type="project" value="UniProtKB-SubCell"/>
</dbReference>
<dbReference type="GO" id="GO:0004125">
    <property type="term" value="F:L-seryl-tRNA(Sec) selenium transferase activity"/>
    <property type="evidence" value="ECO:0007669"/>
    <property type="project" value="UniProtKB-UniRule"/>
</dbReference>
<dbReference type="GO" id="GO:0001717">
    <property type="term" value="P:conversion of seryl-tRNAsec to selenocys-tRNAsec"/>
    <property type="evidence" value="ECO:0007669"/>
    <property type="project" value="UniProtKB-UniRule"/>
</dbReference>
<dbReference type="GO" id="GO:0001514">
    <property type="term" value="P:selenocysteine incorporation"/>
    <property type="evidence" value="ECO:0007669"/>
    <property type="project" value="UniProtKB-UniRule"/>
</dbReference>
<dbReference type="FunFam" id="3.40.640.10:FF:000028">
    <property type="entry name" value="L-seryl-tRNA(Sec) selenium transferase"/>
    <property type="match status" value="1"/>
</dbReference>
<dbReference type="FunFam" id="3.90.1150.180:FF:000001">
    <property type="entry name" value="L-seryl-tRNA(Sec) selenium transferase"/>
    <property type="match status" value="1"/>
</dbReference>
<dbReference type="Gene3D" id="3.90.1150.180">
    <property type="match status" value="1"/>
</dbReference>
<dbReference type="Gene3D" id="3.40.640.10">
    <property type="entry name" value="Type I PLP-dependent aspartate aminotransferase-like (Major domain)"/>
    <property type="match status" value="1"/>
</dbReference>
<dbReference type="HAMAP" id="MF_00423">
    <property type="entry name" value="SelA"/>
    <property type="match status" value="1"/>
</dbReference>
<dbReference type="InterPro" id="IPR015424">
    <property type="entry name" value="PyrdxlP-dep_Trfase"/>
</dbReference>
<dbReference type="InterPro" id="IPR015421">
    <property type="entry name" value="PyrdxlP-dep_Trfase_major"/>
</dbReference>
<dbReference type="InterPro" id="IPR018319">
    <property type="entry name" value="SelA-like"/>
</dbReference>
<dbReference type="InterPro" id="IPR004534">
    <property type="entry name" value="SelA_trans"/>
</dbReference>
<dbReference type="InterPro" id="IPR025862">
    <property type="entry name" value="SelA_trans_N_dom"/>
</dbReference>
<dbReference type="NCBIfam" id="TIGR00474">
    <property type="entry name" value="selA"/>
    <property type="match status" value="1"/>
</dbReference>
<dbReference type="PANTHER" id="PTHR32328">
    <property type="entry name" value="L-SERYL-TRNA(SEC) SELENIUM TRANSFERASE"/>
    <property type="match status" value="1"/>
</dbReference>
<dbReference type="PANTHER" id="PTHR32328:SF0">
    <property type="entry name" value="L-SERYL-TRNA(SEC) SELENIUM TRANSFERASE"/>
    <property type="match status" value="1"/>
</dbReference>
<dbReference type="Pfam" id="PF12390">
    <property type="entry name" value="Se-cys_synth_N"/>
    <property type="match status" value="1"/>
</dbReference>
<dbReference type="Pfam" id="PF03841">
    <property type="entry name" value="SelA"/>
    <property type="match status" value="1"/>
</dbReference>
<dbReference type="SUPFAM" id="SSF53383">
    <property type="entry name" value="PLP-dependent transferases"/>
    <property type="match status" value="1"/>
</dbReference>
<proteinExistence type="inferred from homology"/>
<gene>
    <name evidence="1" type="primary">selA</name>
    <name type="ordered locus">SPA3534</name>
</gene>
<accession>Q5PLQ2</accession>
<keyword id="KW-0963">Cytoplasm</keyword>
<keyword id="KW-0648">Protein biosynthesis</keyword>
<keyword id="KW-0663">Pyridoxal phosphate</keyword>
<keyword id="KW-0711">Selenium</keyword>
<keyword id="KW-0808">Transferase</keyword>
<protein>
    <recommendedName>
        <fullName evidence="1">L-seryl-tRNA(Sec) selenium transferase</fullName>
        <ecNumber evidence="1">2.9.1.1</ecNumber>
    </recommendedName>
    <alternativeName>
        <fullName evidence="1">Selenocysteine synthase</fullName>
        <shortName evidence="1">Sec synthase</shortName>
    </alternativeName>
    <alternativeName>
        <fullName evidence="1">Selenocysteinyl-tRNA(Sec) synthase</fullName>
    </alternativeName>
</protein>
<feature type="chain" id="PRO_1000050380" description="L-seryl-tRNA(Sec) selenium transferase">
    <location>
        <begin position="1"/>
        <end position="463"/>
    </location>
</feature>
<feature type="modified residue" description="N6-(pyridoxal phosphate)lysine" evidence="1">
    <location>
        <position position="295"/>
    </location>
</feature>